<evidence type="ECO:0000255" key="1">
    <source>
        <dbReference type="PROSITE-ProRule" id="PRU01165"/>
    </source>
</evidence>
<evidence type="ECO:0000256" key="2">
    <source>
        <dbReference type="SAM" id="MobiDB-lite"/>
    </source>
</evidence>
<evidence type="ECO:0000269" key="3">
    <source>
    </source>
</evidence>
<evidence type="ECO:0000303" key="4">
    <source>
    </source>
</evidence>
<evidence type="ECO:0000305" key="5"/>
<dbReference type="EMBL" id="EF540816">
    <property type="protein sequence ID" value="ABQ17968.1"/>
    <property type="molecule type" value="mRNA"/>
</dbReference>
<dbReference type="EMBL" id="BN001307">
    <property type="protein sequence ID" value="CBF86097.1"/>
    <property type="molecule type" value="Genomic_DNA"/>
</dbReference>
<dbReference type="EMBL" id="AACD01000032">
    <property type="protein sequence ID" value="EAA64891.1"/>
    <property type="molecule type" value="Genomic_DNA"/>
</dbReference>
<dbReference type="RefSeq" id="XP_659663.1">
    <property type="nucleotide sequence ID" value="XM_654571.1"/>
</dbReference>
<dbReference type="SMR" id="Q5BBM1"/>
<dbReference type="STRING" id="227321.Q5BBM1"/>
<dbReference type="EnsemblFungi" id="CBF86097">
    <property type="protein sequence ID" value="CBF86097"/>
    <property type="gene ID" value="ANIA_02059"/>
</dbReference>
<dbReference type="GeneID" id="2874984"/>
<dbReference type="KEGG" id="ani:ANIA_02059"/>
<dbReference type="VEuPathDB" id="FungiDB:AN2059"/>
<dbReference type="eggNOG" id="ENOG502RYR6">
    <property type="taxonomic scope" value="Eukaryota"/>
</dbReference>
<dbReference type="HOGENOM" id="CLU_569822_0_0_1"/>
<dbReference type="InParanoid" id="Q5BBM1"/>
<dbReference type="OrthoDB" id="3056235at2759"/>
<dbReference type="Proteomes" id="UP000000560">
    <property type="component" value="Chromosome VII"/>
</dbReference>
<dbReference type="GO" id="GO:0005634">
    <property type="term" value="C:nucleus"/>
    <property type="evidence" value="ECO:0000318"/>
    <property type="project" value="GO_Central"/>
</dbReference>
<dbReference type="GO" id="GO:0043943">
    <property type="term" value="P:regulation of asexual sporulation resulting in formation of a cellular spore"/>
    <property type="evidence" value="ECO:0000315"/>
    <property type="project" value="AspGD"/>
</dbReference>
<dbReference type="GO" id="GO:0043940">
    <property type="term" value="P:regulation of sexual sporulation resulting in formation of a cellular spore"/>
    <property type="evidence" value="ECO:0000315"/>
    <property type="project" value="AspGD"/>
</dbReference>
<dbReference type="GO" id="GO:0030435">
    <property type="term" value="P:sporulation resulting in formation of a cellular spore"/>
    <property type="evidence" value="ECO:0000318"/>
    <property type="project" value="GO_Central"/>
</dbReference>
<dbReference type="GO" id="GO:0005992">
    <property type="term" value="P:trehalose biosynthetic process"/>
    <property type="evidence" value="ECO:0000318"/>
    <property type="project" value="GO_Central"/>
</dbReference>
<dbReference type="Gene3D" id="2.60.40.3960">
    <property type="entry name" value="Velvet domain"/>
    <property type="match status" value="1"/>
</dbReference>
<dbReference type="InterPro" id="IPR021740">
    <property type="entry name" value="Velvet"/>
</dbReference>
<dbReference type="InterPro" id="IPR037525">
    <property type="entry name" value="Velvet_dom"/>
</dbReference>
<dbReference type="InterPro" id="IPR038491">
    <property type="entry name" value="Velvet_dom_sf"/>
</dbReference>
<dbReference type="PANTHER" id="PTHR33572:SF17">
    <property type="entry name" value="SEXUAL DEVELOPMENT REGULATOR VELC"/>
    <property type="match status" value="1"/>
</dbReference>
<dbReference type="PANTHER" id="PTHR33572">
    <property type="entry name" value="SPORE DEVELOPMENT REGULATOR VOSA"/>
    <property type="match status" value="1"/>
</dbReference>
<dbReference type="Pfam" id="PF11754">
    <property type="entry name" value="Velvet"/>
    <property type="match status" value="1"/>
</dbReference>
<dbReference type="PROSITE" id="PS51821">
    <property type="entry name" value="VELVET"/>
    <property type="match status" value="1"/>
</dbReference>
<keyword id="KW-0539">Nucleus</keyword>
<keyword id="KW-1185">Reference proteome</keyword>
<keyword id="KW-0749">Sporulation</keyword>
<keyword id="KW-0804">Transcription</keyword>
<keyword id="KW-0805">Transcription regulation</keyword>
<proteinExistence type="evidence at protein level"/>
<name>VELC_EMENI</name>
<feature type="chain" id="PRO_0000435791" description="Sexual development regulator velC">
    <location>
        <begin position="1"/>
        <end position="524"/>
    </location>
</feature>
<feature type="domain" description="Velvet" evidence="1">
    <location>
        <begin position="248"/>
        <end position="500"/>
    </location>
</feature>
<feature type="region of interest" description="Disordered" evidence="2">
    <location>
        <begin position="114"/>
        <end position="195"/>
    </location>
</feature>
<feature type="region of interest" description="Disordered" evidence="2">
    <location>
        <begin position="322"/>
        <end position="349"/>
    </location>
</feature>
<feature type="region of interest" description="Disordered" evidence="2">
    <location>
        <begin position="380"/>
        <end position="413"/>
    </location>
</feature>
<feature type="region of interest" description="Disordered" evidence="2">
    <location>
        <begin position="503"/>
        <end position="524"/>
    </location>
</feature>
<feature type="compositionally biased region" description="Polar residues" evidence="2">
    <location>
        <begin position="131"/>
        <end position="153"/>
    </location>
</feature>
<feature type="compositionally biased region" description="Polar residues" evidence="2">
    <location>
        <begin position="178"/>
        <end position="195"/>
    </location>
</feature>
<feature type="compositionally biased region" description="Polar residues" evidence="2">
    <location>
        <begin position="393"/>
        <end position="402"/>
    </location>
</feature>
<reference key="1">
    <citation type="journal article" date="2014" name="PLoS ONE">
        <title>VelC positively controls sexual development in Aspergillus nidulans.</title>
        <authorList>
            <person name="Park H.S."/>
            <person name="Nam T.Y."/>
            <person name="Han K.H."/>
            <person name="Kim S.C."/>
            <person name="Yu J.H."/>
        </authorList>
    </citation>
    <scope>NUCLEOTIDE SEQUENCE [MRNA]</scope>
    <scope>FUNCTION</scope>
    <scope>DISRUPTION PHENOTYPE</scope>
    <scope>INDUCTION</scope>
    <scope>INTERACTION WITH VOSA</scope>
</reference>
<reference key="2">
    <citation type="journal article" date="2005" name="Nature">
        <title>Sequencing of Aspergillus nidulans and comparative analysis with A. fumigatus and A. oryzae.</title>
        <authorList>
            <person name="Galagan J.E."/>
            <person name="Calvo S.E."/>
            <person name="Cuomo C."/>
            <person name="Ma L.-J."/>
            <person name="Wortman J.R."/>
            <person name="Batzoglou S."/>
            <person name="Lee S.-I."/>
            <person name="Bastuerkmen M."/>
            <person name="Spevak C.C."/>
            <person name="Clutterbuck J."/>
            <person name="Kapitonov V."/>
            <person name="Jurka J."/>
            <person name="Scazzocchio C."/>
            <person name="Farman M.L."/>
            <person name="Butler J."/>
            <person name="Purcell S."/>
            <person name="Harris S."/>
            <person name="Braus G.H."/>
            <person name="Draht O."/>
            <person name="Busch S."/>
            <person name="D'Enfert C."/>
            <person name="Bouchier C."/>
            <person name="Goldman G.H."/>
            <person name="Bell-Pedersen D."/>
            <person name="Griffiths-Jones S."/>
            <person name="Doonan J.H."/>
            <person name="Yu J."/>
            <person name="Vienken K."/>
            <person name="Pain A."/>
            <person name="Freitag M."/>
            <person name="Selker E.U."/>
            <person name="Archer D.B."/>
            <person name="Penalva M.A."/>
            <person name="Oakley B.R."/>
            <person name="Momany M."/>
            <person name="Tanaka T."/>
            <person name="Kumagai T."/>
            <person name="Asai K."/>
            <person name="Machida M."/>
            <person name="Nierman W.C."/>
            <person name="Denning D.W."/>
            <person name="Caddick M.X."/>
            <person name="Hynes M."/>
            <person name="Paoletti M."/>
            <person name="Fischer R."/>
            <person name="Miller B.L."/>
            <person name="Dyer P.S."/>
            <person name="Sachs M.S."/>
            <person name="Osmani S.A."/>
            <person name="Birren B.W."/>
        </authorList>
    </citation>
    <scope>NUCLEOTIDE SEQUENCE [LARGE SCALE GENOMIC DNA]</scope>
    <source>
        <strain>FGSC A4 / ATCC 38163 / CBS 112.46 / NRRL 194 / M139</strain>
    </source>
</reference>
<reference key="3">
    <citation type="journal article" date="2009" name="Fungal Genet. Biol.">
        <title>The 2008 update of the Aspergillus nidulans genome annotation: a community effort.</title>
        <authorList>
            <person name="Wortman J.R."/>
            <person name="Gilsenan J.M."/>
            <person name="Joardar V."/>
            <person name="Deegan J."/>
            <person name="Clutterbuck J."/>
            <person name="Andersen M.R."/>
            <person name="Archer D."/>
            <person name="Bencina M."/>
            <person name="Braus G."/>
            <person name="Coutinho P."/>
            <person name="von Dohren H."/>
            <person name="Doonan J."/>
            <person name="Driessen A.J."/>
            <person name="Durek P."/>
            <person name="Espeso E."/>
            <person name="Fekete E."/>
            <person name="Flipphi M."/>
            <person name="Estrada C.G."/>
            <person name="Geysens S."/>
            <person name="Goldman G."/>
            <person name="de Groot P.W."/>
            <person name="Hansen K."/>
            <person name="Harris S.D."/>
            <person name="Heinekamp T."/>
            <person name="Helmstaedt K."/>
            <person name="Henrissat B."/>
            <person name="Hofmann G."/>
            <person name="Homan T."/>
            <person name="Horio T."/>
            <person name="Horiuchi H."/>
            <person name="James S."/>
            <person name="Jones M."/>
            <person name="Karaffa L."/>
            <person name="Karanyi Z."/>
            <person name="Kato M."/>
            <person name="Keller N."/>
            <person name="Kelly D.E."/>
            <person name="Kiel J.A."/>
            <person name="Kim J.M."/>
            <person name="van der Klei I.J."/>
            <person name="Klis F.M."/>
            <person name="Kovalchuk A."/>
            <person name="Krasevec N."/>
            <person name="Kubicek C.P."/>
            <person name="Liu B."/>
            <person name="Maccabe A."/>
            <person name="Meyer V."/>
            <person name="Mirabito P."/>
            <person name="Miskei M."/>
            <person name="Mos M."/>
            <person name="Mullins J."/>
            <person name="Nelson D.R."/>
            <person name="Nielsen J."/>
            <person name="Oakley B.R."/>
            <person name="Osmani S.A."/>
            <person name="Pakula T."/>
            <person name="Paszewski A."/>
            <person name="Paulsen I."/>
            <person name="Pilsyk S."/>
            <person name="Pocsi I."/>
            <person name="Punt P.J."/>
            <person name="Ram A.F."/>
            <person name="Ren Q."/>
            <person name="Robellet X."/>
            <person name="Robson G."/>
            <person name="Seiboth B."/>
            <person name="van Solingen P."/>
            <person name="Specht T."/>
            <person name="Sun J."/>
            <person name="Taheri-Talesh N."/>
            <person name="Takeshita N."/>
            <person name="Ussery D."/>
            <person name="vanKuyk P.A."/>
            <person name="Visser H."/>
            <person name="van de Vondervoort P.J."/>
            <person name="de Vries R.P."/>
            <person name="Walton J."/>
            <person name="Xiang X."/>
            <person name="Xiong Y."/>
            <person name="Zeng A.P."/>
            <person name="Brandt B.W."/>
            <person name="Cornell M.J."/>
            <person name="van den Hondel C.A."/>
            <person name="Visser J."/>
            <person name="Oliver S.G."/>
            <person name="Turner G."/>
        </authorList>
    </citation>
    <scope>GENOME REANNOTATION</scope>
    <source>
        <strain>FGSC A4 / ATCC 38163 / CBS 112.46 / NRRL 194 / M139</strain>
    </source>
</reference>
<comment type="function">
    <text evidence="3">Velvet-domain-containing protein that acts as a positive regulator of sexual development (PubMed:24587098). Positively regulates the production of the sexual fruiting bodies called cleistothecia (PubMed:24587098).</text>
</comment>
<comment type="subunit">
    <text evidence="3">Interacts with vosA (PubMed:24587098).</text>
</comment>
<comment type="subcellular location">
    <subcellularLocation>
        <location evidence="5">Nucleus</location>
    </subcellularLocation>
</comment>
<comment type="induction">
    <text evidence="3">Specifically accumulates during the early phase of sexual development (PubMed:24587098).</text>
</comment>
<comment type="disruption phenotype">
    <text evidence="3">Leads to increased number of conidia and reduced production of cleistothecia (PubMed:24587098). Increases expression of brlA, abaA, wetA and vosA genes that control sequential activation of asexual sporulation (PubMed:24587098).</text>
</comment>
<comment type="similarity">
    <text evidence="5">Belongs to the velvet family. VelC subfamily.</text>
</comment>
<sequence length="524" mass="57329">MTTHVGPQTTLLHQTGQISALIAGEAVQTCEASSCQMSGTPFQQWTYVTEGRYTNARTHPSDEDRRRQTTVSNPRYLAQEPPRFLLPTAQNNAPTMSQSATYSTLPVQGFPEQNRVLDNRSDPKYGPLPATTGSLAQYSIQRPSTSRNMENAGSSSSYYDAPSCSRGSVGSIGRMNDLDSQYSGSTTAFPSPVHSDSSPIYPAIAPISGYQQQLPIHQRHTTSSMPSGFENLLHHHSTSPSPPPRCASSSSRYRLFIRQQPLAARACGAGDRDRRPVDPPPIIQLLLTEFNPNSEKDRSILQDPRFTVGCLLYPVRNPSYLPGSGSGAGSSDTNTNSNDKSRHESMSSYSQLGINLEDSHATGQSTPLLSGKAFVSPFFVDEEPDPNTAPAHPSSTDDSTYDASPRTVTHRFRNRPLPKPPACFFIFSDLSVRTAGLYRLQFRLMNWGSIEDTGQSMPILAEVWSEPFRVCAAKDFPGMRDSSLLTLRLKELGFVELKTRGQGMGKGRRVGIGSSKVSSRARVE</sequence>
<protein>
    <recommendedName>
        <fullName evidence="5">Sexual development regulator velC</fullName>
    </recommendedName>
</protein>
<gene>
    <name evidence="4" type="primary">velC</name>
    <name type="ORF">ANIA_02059</name>
</gene>
<accession>Q5BBM1</accession>
<accession>A5HMG6</accession>
<accession>C8VLN5</accession>
<organism>
    <name type="scientific">Emericella nidulans (strain FGSC A4 / ATCC 38163 / CBS 112.46 / NRRL 194 / M139)</name>
    <name type="common">Aspergillus nidulans</name>
    <dbReference type="NCBI Taxonomy" id="227321"/>
    <lineage>
        <taxon>Eukaryota</taxon>
        <taxon>Fungi</taxon>
        <taxon>Dikarya</taxon>
        <taxon>Ascomycota</taxon>
        <taxon>Pezizomycotina</taxon>
        <taxon>Eurotiomycetes</taxon>
        <taxon>Eurotiomycetidae</taxon>
        <taxon>Eurotiales</taxon>
        <taxon>Aspergillaceae</taxon>
        <taxon>Aspergillus</taxon>
        <taxon>Aspergillus subgen. Nidulantes</taxon>
    </lineage>
</organism>